<protein>
    <recommendedName>
        <fullName evidence="1">Endonuclease V</fullName>
        <ecNumber evidence="1">3.1.21.7</ecNumber>
    </recommendedName>
    <alternativeName>
        <fullName evidence="1">Deoxyinosine 3'endonuclease</fullName>
    </alternativeName>
    <alternativeName>
        <fullName evidence="1">Deoxyribonuclease V</fullName>
        <shortName evidence="1">DNase V</shortName>
    </alternativeName>
</protein>
<reference key="1">
    <citation type="submission" date="2006-10" db="EMBL/GenBank/DDBJ databases">
        <title>Complete sequence of Methanosaeta thermophila PT.</title>
        <authorList>
            <consortium name="US DOE Joint Genome Institute"/>
            <person name="Copeland A."/>
            <person name="Lucas S."/>
            <person name="Lapidus A."/>
            <person name="Barry K."/>
            <person name="Detter J.C."/>
            <person name="Glavina del Rio T."/>
            <person name="Hammon N."/>
            <person name="Israni S."/>
            <person name="Pitluck S."/>
            <person name="Chain P."/>
            <person name="Malfatti S."/>
            <person name="Shin M."/>
            <person name="Vergez L."/>
            <person name="Schmutz J."/>
            <person name="Larimer F."/>
            <person name="Land M."/>
            <person name="Hauser L."/>
            <person name="Kyrpides N."/>
            <person name="Kim E."/>
            <person name="Smith K.S."/>
            <person name="Ingram-Smith C."/>
            <person name="Richardson P."/>
        </authorList>
    </citation>
    <scope>NUCLEOTIDE SEQUENCE [LARGE SCALE GENOMIC DNA]</scope>
    <source>
        <strain>DSM 6194 / JCM 14653 / NBRC 101360 / PT</strain>
    </source>
</reference>
<comment type="function">
    <text evidence="1">DNA repair enzyme involved in the repair of deaminated bases. Selectively cleaves double-stranded DNA at the second phosphodiester bond 3' to a deoxyinosine leaving behind the intact lesion on the nicked DNA.</text>
</comment>
<comment type="catalytic activity">
    <reaction evidence="1">
        <text>Endonucleolytic cleavage at apurinic or apyrimidinic sites to products with a 5'-phosphate.</text>
        <dbReference type="EC" id="3.1.21.7"/>
    </reaction>
</comment>
<comment type="cofactor">
    <cofactor evidence="1">
        <name>Mg(2+)</name>
        <dbReference type="ChEBI" id="CHEBI:18420"/>
    </cofactor>
</comment>
<comment type="subcellular location">
    <subcellularLocation>
        <location evidence="1">Cytoplasm</location>
    </subcellularLocation>
</comment>
<comment type="similarity">
    <text evidence="1">Belongs to the endonuclease V family.</text>
</comment>
<gene>
    <name evidence="1" type="primary">nfi</name>
    <name type="ordered locus">Mthe_1279</name>
</gene>
<evidence type="ECO:0000255" key="1">
    <source>
        <dbReference type="HAMAP-Rule" id="MF_00801"/>
    </source>
</evidence>
<feature type="chain" id="PRO_1000212975" description="Endonuclease V">
    <location>
        <begin position="1"/>
        <end position="223"/>
    </location>
</feature>
<feature type="binding site" evidence="1">
    <location>
        <position position="44"/>
    </location>
    <ligand>
        <name>Mg(2+)</name>
        <dbReference type="ChEBI" id="CHEBI:18420"/>
    </ligand>
</feature>
<feature type="binding site" evidence="1">
    <location>
        <position position="109"/>
    </location>
    <ligand>
        <name>Mg(2+)</name>
        <dbReference type="ChEBI" id="CHEBI:18420"/>
    </ligand>
</feature>
<feature type="site" description="Interaction with target DNA" evidence="1">
    <location>
        <position position="80"/>
    </location>
</feature>
<keyword id="KW-0963">Cytoplasm</keyword>
<keyword id="KW-0227">DNA damage</keyword>
<keyword id="KW-0234">DNA repair</keyword>
<keyword id="KW-0255">Endonuclease</keyword>
<keyword id="KW-0378">Hydrolase</keyword>
<keyword id="KW-0460">Magnesium</keyword>
<keyword id="KW-0479">Metal-binding</keyword>
<keyword id="KW-0540">Nuclease</keyword>
<keyword id="KW-1185">Reference proteome</keyword>
<dbReference type="EC" id="3.1.21.7" evidence="1"/>
<dbReference type="EMBL" id="CP000477">
    <property type="protein sequence ID" value="ABK15057.1"/>
    <property type="molecule type" value="Genomic_DNA"/>
</dbReference>
<dbReference type="SMR" id="A0B8N3"/>
<dbReference type="STRING" id="349307.Mthe_1279"/>
<dbReference type="KEGG" id="mtp:Mthe_1279"/>
<dbReference type="HOGENOM" id="CLU_047631_1_1_2"/>
<dbReference type="Proteomes" id="UP000000674">
    <property type="component" value="Chromosome"/>
</dbReference>
<dbReference type="GO" id="GO:0005737">
    <property type="term" value="C:cytoplasm"/>
    <property type="evidence" value="ECO:0007669"/>
    <property type="project" value="UniProtKB-SubCell"/>
</dbReference>
<dbReference type="GO" id="GO:0043737">
    <property type="term" value="F:deoxyribonuclease V activity"/>
    <property type="evidence" value="ECO:0007669"/>
    <property type="project" value="UniProtKB-UniRule"/>
</dbReference>
<dbReference type="GO" id="GO:0000287">
    <property type="term" value="F:magnesium ion binding"/>
    <property type="evidence" value="ECO:0007669"/>
    <property type="project" value="UniProtKB-UniRule"/>
</dbReference>
<dbReference type="GO" id="GO:0016891">
    <property type="term" value="F:RNA endonuclease activity, producing 5'-phosphomonoesters"/>
    <property type="evidence" value="ECO:0007669"/>
    <property type="project" value="TreeGrafter"/>
</dbReference>
<dbReference type="GO" id="GO:0003727">
    <property type="term" value="F:single-stranded RNA binding"/>
    <property type="evidence" value="ECO:0007669"/>
    <property type="project" value="TreeGrafter"/>
</dbReference>
<dbReference type="GO" id="GO:0006281">
    <property type="term" value="P:DNA repair"/>
    <property type="evidence" value="ECO:0007669"/>
    <property type="project" value="UniProtKB-UniRule"/>
</dbReference>
<dbReference type="CDD" id="cd06559">
    <property type="entry name" value="Endonuclease_V"/>
    <property type="match status" value="1"/>
</dbReference>
<dbReference type="Gene3D" id="3.30.2170.10">
    <property type="entry name" value="archaeoglobus fulgidus dsm 4304 superfamily"/>
    <property type="match status" value="1"/>
</dbReference>
<dbReference type="HAMAP" id="MF_00801">
    <property type="entry name" value="Endonuclease_5"/>
    <property type="match status" value="1"/>
</dbReference>
<dbReference type="InterPro" id="IPR007581">
    <property type="entry name" value="Endonuclease-V"/>
</dbReference>
<dbReference type="PANTHER" id="PTHR28511">
    <property type="entry name" value="ENDONUCLEASE V"/>
    <property type="match status" value="1"/>
</dbReference>
<dbReference type="PANTHER" id="PTHR28511:SF1">
    <property type="entry name" value="ENDONUCLEASE V"/>
    <property type="match status" value="1"/>
</dbReference>
<dbReference type="Pfam" id="PF04493">
    <property type="entry name" value="Endonuclease_5"/>
    <property type="match status" value="1"/>
</dbReference>
<accession>A0B8N3</accession>
<name>NFI_METTP</name>
<sequence>MGMRYRALHSWDVRPDEAVEIQKMLAGSVRFQRVDRVETVAGADVSFSGSRAHAAAVLLDYHDMRLLDVSFAEMDVVYPYIPGLLTFREGPVILRALEGIDEADVLLFDGQGIAHPRRFGEASHLGLLLDRPSIGCAKSRLWGEFREPDGERGSFSLLVDRGEVVGAALRTRTNVRPVFVSPGHMSDLSSAIEIALNCARGYRVPEPLRLAHILSLKRARMTR</sequence>
<organism>
    <name type="scientific">Methanothrix thermoacetophila (strain DSM 6194 / JCM 14653 / NBRC 101360 / PT)</name>
    <name type="common">Methanosaeta thermophila</name>
    <dbReference type="NCBI Taxonomy" id="349307"/>
    <lineage>
        <taxon>Archaea</taxon>
        <taxon>Methanobacteriati</taxon>
        <taxon>Methanobacteriota</taxon>
        <taxon>Stenosarchaea group</taxon>
        <taxon>Methanomicrobia</taxon>
        <taxon>Methanotrichales</taxon>
        <taxon>Methanotrichaceae</taxon>
        <taxon>Methanothrix</taxon>
    </lineage>
</organism>
<proteinExistence type="inferred from homology"/>